<sequence length="664" mass="76138">MTAQSNITPESIVADLRYLQLLSRSFPTIAAASTEIINLEAILNLPKGTEHFLTDIHGEYEAFQHVLKNASGAVKRKVNEIFGHTLREIEKKELCTLIYYPEEKLQLIKATETDIDDWYLITLNQLVKVCQNVSSKYTRSKVRKSLPAEFSYIIQELLHESTIEPNKHAYINVIISTIISTRRADDFIIAMCNLIQRLTIDSLHIVGDIYDRGPGAHIIMDTLCDYHNFDIQWGNHDILWMGAASGNEACMANVIRLSMRYGNLGTLEDGYGINLLPLATFAMDTYADDPCTIFAPKTNFADSTYNEKTLRLITQMHKAITIIQFKLEANIINRRPEFGMGGRKLLEKIDFERGVFVYEGKEYPLRDTNFPTVDPADPYRLTDEEQELIEKIHYSFMNSEKLKKHMRCLFTYGGMYLVCNSNLLYHASVPLNEDGSFKHVNICGKEYWGKNLLDKIDQLIRTAYFDEDDEEEKRFAMDYIWYLWCGPDAPSFDKDKMATFERYFIADKSLHKETKGYYYALRNKEEICDRILEEFGVTGQHTHIINGHVPVKTIKGEQPMKAGGKLLVIDGGFSKAYQPETGIAGYTLVYHSHGLQLVQHDPFQSTQKAIEEGQDIKSTTFVIEFNSQRMMVKDTDKGKELVTQILDLKKLLVAYRIGLIKEKV</sequence>
<dbReference type="EC" id="3.1.3.11" evidence="1"/>
<dbReference type="EMBL" id="CR626927">
    <property type="protein sequence ID" value="CAH07582.1"/>
    <property type="molecule type" value="Genomic_DNA"/>
</dbReference>
<dbReference type="RefSeq" id="WP_005794862.1">
    <property type="nucleotide sequence ID" value="NZ_UFTH01000001.1"/>
</dbReference>
<dbReference type="PaxDb" id="272559-BF9343_1801"/>
<dbReference type="KEGG" id="bfs:BF9343_1801"/>
<dbReference type="eggNOG" id="COG3855">
    <property type="taxonomic scope" value="Bacteria"/>
</dbReference>
<dbReference type="HOGENOM" id="CLU_028392_2_0_10"/>
<dbReference type="UniPathway" id="UPA00138"/>
<dbReference type="Proteomes" id="UP000006731">
    <property type="component" value="Chromosome"/>
</dbReference>
<dbReference type="GO" id="GO:0042132">
    <property type="term" value="F:fructose 1,6-bisphosphate 1-phosphatase activity"/>
    <property type="evidence" value="ECO:0007669"/>
    <property type="project" value="UniProtKB-UniRule"/>
</dbReference>
<dbReference type="GO" id="GO:0006094">
    <property type="term" value="P:gluconeogenesis"/>
    <property type="evidence" value="ECO:0007669"/>
    <property type="project" value="UniProtKB-UniRule"/>
</dbReference>
<dbReference type="HAMAP" id="MF_01854">
    <property type="entry name" value="FBPase_class3"/>
    <property type="match status" value="1"/>
</dbReference>
<dbReference type="InterPro" id="IPR009164">
    <property type="entry name" value="FBPtase_class3"/>
</dbReference>
<dbReference type="InterPro" id="IPR029052">
    <property type="entry name" value="Metallo-depent_PP-like"/>
</dbReference>
<dbReference type="Pfam" id="PF06874">
    <property type="entry name" value="FBPase_2"/>
    <property type="match status" value="1"/>
</dbReference>
<dbReference type="PIRSF" id="PIRSF000906">
    <property type="entry name" value="FBPtase_Bacill"/>
    <property type="match status" value="1"/>
</dbReference>
<dbReference type="SUPFAM" id="SSF56300">
    <property type="entry name" value="Metallo-dependent phosphatases"/>
    <property type="match status" value="1"/>
</dbReference>
<name>F16PC_BACFN</name>
<organism>
    <name type="scientific">Bacteroides fragilis (strain ATCC 25285 / DSM 2151 / CCUG 4856 / JCM 11019 / LMG 10263 / NCTC 9343 / Onslow / VPI 2553 / EN-2)</name>
    <dbReference type="NCBI Taxonomy" id="272559"/>
    <lineage>
        <taxon>Bacteria</taxon>
        <taxon>Pseudomonadati</taxon>
        <taxon>Bacteroidota</taxon>
        <taxon>Bacteroidia</taxon>
        <taxon>Bacteroidales</taxon>
        <taxon>Bacteroidaceae</taxon>
        <taxon>Bacteroides</taxon>
    </lineage>
</organism>
<feature type="chain" id="PRO_0000363074" description="Fructose-1,6-bisphosphatase class 3">
    <location>
        <begin position="1"/>
        <end position="664"/>
    </location>
</feature>
<keyword id="KW-0119">Carbohydrate metabolism</keyword>
<keyword id="KW-0378">Hydrolase</keyword>
<keyword id="KW-0464">Manganese</keyword>
<reference key="1">
    <citation type="journal article" date="2005" name="Science">
        <title>Extensive DNA inversions in the B. fragilis genome control variable gene expression.</title>
        <authorList>
            <person name="Cerdeno-Tarraga A.-M."/>
            <person name="Patrick S."/>
            <person name="Crossman L.C."/>
            <person name="Blakely G."/>
            <person name="Abratt V."/>
            <person name="Lennard N."/>
            <person name="Poxton I."/>
            <person name="Duerden B."/>
            <person name="Harris B."/>
            <person name="Quail M.A."/>
            <person name="Barron A."/>
            <person name="Clark L."/>
            <person name="Corton C."/>
            <person name="Doggett J."/>
            <person name="Holden M.T.G."/>
            <person name="Larke N."/>
            <person name="Line A."/>
            <person name="Lord A."/>
            <person name="Norbertczak H."/>
            <person name="Ormond D."/>
            <person name="Price C."/>
            <person name="Rabbinowitsch E."/>
            <person name="Woodward J."/>
            <person name="Barrell B.G."/>
            <person name="Parkhill J."/>
        </authorList>
    </citation>
    <scope>NUCLEOTIDE SEQUENCE [LARGE SCALE GENOMIC DNA]</scope>
    <source>
        <strain>ATCC 25285 / DSM 2151 / CCUG 4856 / JCM 11019 / LMG 10263 / NCTC 9343 / Onslow / VPI 2553 / EN-2</strain>
    </source>
</reference>
<evidence type="ECO:0000255" key="1">
    <source>
        <dbReference type="HAMAP-Rule" id="MF_01854"/>
    </source>
</evidence>
<accession>Q5LE70</accession>
<comment type="catalytic activity">
    <reaction evidence="1">
        <text>beta-D-fructose 1,6-bisphosphate + H2O = beta-D-fructose 6-phosphate + phosphate</text>
        <dbReference type="Rhea" id="RHEA:11064"/>
        <dbReference type="ChEBI" id="CHEBI:15377"/>
        <dbReference type="ChEBI" id="CHEBI:32966"/>
        <dbReference type="ChEBI" id="CHEBI:43474"/>
        <dbReference type="ChEBI" id="CHEBI:57634"/>
        <dbReference type="EC" id="3.1.3.11"/>
    </reaction>
</comment>
<comment type="cofactor">
    <cofactor evidence="1">
        <name>Mn(2+)</name>
        <dbReference type="ChEBI" id="CHEBI:29035"/>
    </cofactor>
</comment>
<comment type="pathway">
    <text evidence="1">Carbohydrate biosynthesis; gluconeogenesis.</text>
</comment>
<comment type="similarity">
    <text evidence="1">Belongs to the FBPase class 3 family.</text>
</comment>
<proteinExistence type="inferred from homology"/>
<gene>
    <name evidence="1" type="primary">fbp</name>
    <name type="ordered locus">BF1884</name>
</gene>
<protein>
    <recommendedName>
        <fullName evidence="1">Fructose-1,6-bisphosphatase class 3</fullName>
        <shortName evidence="1">FBPase class 3</shortName>
        <ecNumber evidence="1">3.1.3.11</ecNumber>
    </recommendedName>
    <alternativeName>
        <fullName evidence="1">D-fructose-1,6-bisphosphate 1-phosphohydrolase class 3</fullName>
    </alternativeName>
</protein>